<gene>
    <name evidence="1" type="primary">uvrB</name>
    <name type="ordered locus">PSPPH_1941</name>
</gene>
<sequence length="671" mass="76300">MSEFQLVTRFEPAGDQPEAIRQLVEGIDAGLAHQTLLGVTGSGKTFSIANVISQVKRPTLVLAPNKTLAAQLYGEFKAFFPNNAVEYFVSYYDYYQPEAYVPSSDTFIEKDASINDHIEQMRLSATKALLERKDAIIVTTVSCIYGLGSPETYLRMVMHIDRGDKLDQRALLRRLADLQYTRNDMDFARATFRVRGDVIDIYPAESDLEAIRVELFDDEVESLSAFDPLTGEVIRKLPRFTFYPKSHYVTPRETLIEAMEGIKVELQERLEYLRTQNKLVEAQRLEQRTRFDLEMMLELGYCNGIENYSRYLSGRPSGAPPPTLFDYLPADALLVIDESHVSVPQVGAMYKGDRSRKETLVEYGFRLPSALDNRPMRFDEWEAISPQTIFVSATPGNYEAEHAGRVVEQVVRPTGLVDPQIEIRPALTQVDDLLSEIHKRTALEERVLVTTLTKRMSEDLTDYLSDHGVRVRYLHSDIDTVERVEIIRDLRLGTFDVLVGINLLREGLDMPEVSLVAILDADKEGFLRSDRSLIQTIGRAARNLNGRAILYADRITGSMERAIGETERRRDKQLAFNHEHGITPKGVFKDVADIMEGATVPGSRSKKRKGMAKAAEENARYENELRSPSEINKRIRQLEEKMYQLARDLEFEAAAQMRDEIGKLRERLLAV</sequence>
<feature type="chain" id="PRO_0000227350" description="UvrABC system protein B">
    <location>
        <begin position="1"/>
        <end position="671"/>
    </location>
</feature>
<feature type="domain" description="Helicase ATP-binding" evidence="1">
    <location>
        <begin position="25"/>
        <end position="412"/>
    </location>
</feature>
<feature type="domain" description="Helicase C-terminal" evidence="1">
    <location>
        <begin position="429"/>
        <end position="595"/>
    </location>
</feature>
<feature type="domain" description="UVR" evidence="1">
    <location>
        <begin position="632"/>
        <end position="667"/>
    </location>
</feature>
<feature type="region of interest" description="Disordered" evidence="2">
    <location>
        <begin position="600"/>
        <end position="624"/>
    </location>
</feature>
<feature type="short sequence motif" description="Beta-hairpin">
    <location>
        <begin position="91"/>
        <end position="114"/>
    </location>
</feature>
<feature type="compositionally biased region" description="Basic and acidic residues" evidence="2">
    <location>
        <begin position="614"/>
        <end position="624"/>
    </location>
</feature>
<feature type="binding site" evidence="1">
    <location>
        <begin position="38"/>
        <end position="45"/>
    </location>
    <ligand>
        <name>ATP</name>
        <dbReference type="ChEBI" id="CHEBI:30616"/>
    </ligand>
</feature>
<accession>Q48KA6</accession>
<keyword id="KW-0067">ATP-binding</keyword>
<keyword id="KW-0963">Cytoplasm</keyword>
<keyword id="KW-0227">DNA damage</keyword>
<keyword id="KW-0228">DNA excision</keyword>
<keyword id="KW-0234">DNA repair</keyword>
<keyword id="KW-0267">Excision nuclease</keyword>
<keyword id="KW-0547">Nucleotide-binding</keyword>
<keyword id="KW-0742">SOS response</keyword>
<dbReference type="EMBL" id="CP000058">
    <property type="protein sequence ID" value="AAZ37182.1"/>
    <property type="molecule type" value="Genomic_DNA"/>
</dbReference>
<dbReference type="RefSeq" id="WP_011168302.1">
    <property type="nucleotide sequence ID" value="NC_005773.3"/>
</dbReference>
<dbReference type="SMR" id="Q48KA6"/>
<dbReference type="KEGG" id="psp:PSPPH_1941"/>
<dbReference type="eggNOG" id="COG0556">
    <property type="taxonomic scope" value="Bacteria"/>
</dbReference>
<dbReference type="HOGENOM" id="CLU_009621_2_1_6"/>
<dbReference type="Proteomes" id="UP000000551">
    <property type="component" value="Chromosome"/>
</dbReference>
<dbReference type="GO" id="GO:0005737">
    <property type="term" value="C:cytoplasm"/>
    <property type="evidence" value="ECO:0007669"/>
    <property type="project" value="UniProtKB-SubCell"/>
</dbReference>
<dbReference type="GO" id="GO:0009380">
    <property type="term" value="C:excinuclease repair complex"/>
    <property type="evidence" value="ECO:0007669"/>
    <property type="project" value="InterPro"/>
</dbReference>
<dbReference type="GO" id="GO:0005524">
    <property type="term" value="F:ATP binding"/>
    <property type="evidence" value="ECO:0007669"/>
    <property type="project" value="UniProtKB-UniRule"/>
</dbReference>
<dbReference type="GO" id="GO:0016887">
    <property type="term" value="F:ATP hydrolysis activity"/>
    <property type="evidence" value="ECO:0007669"/>
    <property type="project" value="InterPro"/>
</dbReference>
<dbReference type="GO" id="GO:0003677">
    <property type="term" value="F:DNA binding"/>
    <property type="evidence" value="ECO:0007669"/>
    <property type="project" value="UniProtKB-UniRule"/>
</dbReference>
<dbReference type="GO" id="GO:0009381">
    <property type="term" value="F:excinuclease ABC activity"/>
    <property type="evidence" value="ECO:0007669"/>
    <property type="project" value="UniProtKB-UniRule"/>
</dbReference>
<dbReference type="GO" id="GO:0006289">
    <property type="term" value="P:nucleotide-excision repair"/>
    <property type="evidence" value="ECO:0007669"/>
    <property type="project" value="UniProtKB-UniRule"/>
</dbReference>
<dbReference type="GO" id="GO:0009432">
    <property type="term" value="P:SOS response"/>
    <property type="evidence" value="ECO:0007669"/>
    <property type="project" value="UniProtKB-UniRule"/>
</dbReference>
<dbReference type="CDD" id="cd17916">
    <property type="entry name" value="DEXHc_UvrB"/>
    <property type="match status" value="1"/>
</dbReference>
<dbReference type="CDD" id="cd18790">
    <property type="entry name" value="SF2_C_UvrB"/>
    <property type="match status" value="1"/>
</dbReference>
<dbReference type="FunFam" id="3.40.50.300:FF:000477">
    <property type="entry name" value="UvrABC system protein B"/>
    <property type="match status" value="1"/>
</dbReference>
<dbReference type="Gene3D" id="6.10.140.240">
    <property type="match status" value="1"/>
</dbReference>
<dbReference type="Gene3D" id="3.40.50.300">
    <property type="entry name" value="P-loop containing nucleotide triphosphate hydrolases"/>
    <property type="match status" value="3"/>
</dbReference>
<dbReference type="Gene3D" id="4.10.860.10">
    <property type="entry name" value="UVR domain"/>
    <property type="match status" value="1"/>
</dbReference>
<dbReference type="HAMAP" id="MF_00204">
    <property type="entry name" value="UvrB"/>
    <property type="match status" value="1"/>
</dbReference>
<dbReference type="InterPro" id="IPR006935">
    <property type="entry name" value="Helicase/UvrB_N"/>
</dbReference>
<dbReference type="InterPro" id="IPR014001">
    <property type="entry name" value="Helicase_ATP-bd"/>
</dbReference>
<dbReference type="InterPro" id="IPR001650">
    <property type="entry name" value="Helicase_C-like"/>
</dbReference>
<dbReference type="InterPro" id="IPR027417">
    <property type="entry name" value="P-loop_NTPase"/>
</dbReference>
<dbReference type="InterPro" id="IPR001943">
    <property type="entry name" value="UVR_dom"/>
</dbReference>
<dbReference type="InterPro" id="IPR036876">
    <property type="entry name" value="UVR_dom_sf"/>
</dbReference>
<dbReference type="InterPro" id="IPR004807">
    <property type="entry name" value="UvrB"/>
</dbReference>
<dbReference type="InterPro" id="IPR041471">
    <property type="entry name" value="UvrB_inter"/>
</dbReference>
<dbReference type="InterPro" id="IPR024759">
    <property type="entry name" value="UvrB_YAD/RRR_dom"/>
</dbReference>
<dbReference type="NCBIfam" id="NF003673">
    <property type="entry name" value="PRK05298.1"/>
    <property type="match status" value="1"/>
</dbReference>
<dbReference type="NCBIfam" id="TIGR00631">
    <property type="entry name" value="uvrb"/>
    <property type="match status" value="1"/>
</dbReference>
<dbReference type="PANTHER" id="PTHR24029">
    <property type="entry name" value="UVRABC SYSTEM PROTEIN B"/>
    <property type="match status" value="1"/>
</dbReference>
<dbReference type="PANTHER" id="PTHR24029:SF0">
    <property type="entry name" value="UVRABC SYSTEM PROTEIN B"/>
    <property type="match status" value="1"/>
</dbReference>
<dbReference type="Pfam" id="PF00271">
    <property type="entry name" value="Helicase_C"/>
    <property type="match status" value="1"/>
</dbReference>
<dbReference type="Pfam" id="PF04851">
    <property type="entry name" value="ResIII"/>
    <property type="match status" value="1"/>
</dbReference>
<dbReference type="Pfam" id="PF02151">
    <property type="entry name" value="UVR"/>
    <property type="match status" value="1"/>
</dbReference>
<dbReference type="Pfam" id="PF12344">
    <property type="entry name" value="UvrB"/>
    <property type="match status" value="1"/>
</dbReference>
<dbReference type="Pfam" id="PF17757">
    <property type="entry name" value="UvrB_inter"/>
    <property type="match status" value="1"/>
</dbReference>
<dbReference type="SMART" id="SM00487">
    <property type="entry name" value="DEXDc"/>
    <property type="match status" value="1"/>
</dbReference>
<dbReference type="SMART" id="SM00490">
    <property type="entry name" value="HELICc"/>
    <property type="match status" value="1"/>
</dbReference>
<dbReference type="SUPFAM" id="SSF46600">
    <property type="entry name" value="C-terminal UvrC-binding domain of UvrB"/>
    <property type="match status" value="1"/>
</dbReference>
<dbReference type="SUPFAM" id="SSF52540">
    <property type="entry name" value="P-loop containing nucleoside triphosphate hydrolases"/>
    <property type="match status" value="2"/>
</dbReference>
<dbReference type="PROSITE" id="PS51192">
    <property type="entry name" value="HELICASE_ATP_BIND_1"/>
    <property type="match status" value="1"/>
</dbReference>
<dbReference type="PROSITE" id="PS51194">
    <property type="entry name" value="HELICASE_CTER"/>
    <property type="match status" value="1"/>
</dbReference>
<dbReference type="PROSITE" id="PS50151">
    <property type="entry name" value="UVR"/>
    <property type="match status" value="1"/>
</dbReference>
<organism>
    <name type="scientific">Pseudomonas savastanoi pv. phaseolicola (strain 1448A / Race 6)</name>
    <name type="common">Pseudomonas syringae pv. phaseolicola (strain 1448A / Race 6)</name>
    <dbReference type="NCBI Taxonomy" id="264730"/>
    <lineage>
        <taxon>Bacteria</taxon>
        <taxon>Pseudomonadati</taxon>
        <taxon>Pseudomonadota</taxon>
        <taxon>Gammaproteobacteria</taxon>
        <taxon>Pseudomonadales</taxon>
        <taxon>Pseudomonadaceae</taxon>
        <taxon>Pseudomonas</taxon>
    </lineage>
</organism>
<evidence type="ECO:0000255" key="1">
    <source>
        <dbReference type="HAMAP-Rule" id="MF_00204"/>
    </source>
</evidence>
<evidence type="ECO:0000256" key="2">
    <source>
        <dbReference type="SAM" id="MobiDB-lite"/>
    </source>
</evidence>
<name>UVRB_PSE14</name>
<protein>
    <recommendedName>
        <fullName evidence="1">UvrABC system protein B</fullName>
        <shortName evidence="1">Protein UvrB</shortName>
    </recommendedName>
    <alternativeName>
        <fullName evidence="1">Excinuclease ABC subunit B</fullName>
    </alternativeName>
</protein>
<reference key="1">
    <citation type="journal article" date="2005" name="J. Bacteriol.">
        <title>Whole-genome sequence analysis of Pseudomonas syringae pv. phaseolicola 1448A reveals divergence among pathovars in genes involved in virulence and transposition.</title>
        <authorList>
            <person name="Joardar V."/>
            <person name="Lindeberg M."/>
            <person name="Jackson R.W."/>
            <person name="Selengut J."/>
            <person name="Dodson R."/>
            <person name="Brinkac L.M."/>
            <person name="Daugherty S.C."/>
            <person name="DeBoy R.T."/>
            <person name="Durkin A.S."/>
            <person name="Gwinn Giglio M."/>
            <person name="Madupu R."/>
            <person name="Nelson W.C."/>
            <person name="Rosovitz M.J."/>
            <person name="Sullivan S.A."/>
            <person name="Crabtree J."/>
            <person name="Creasy T."/>
            <person name="Davidsen T.M."/>
            <person name="Haft D.H."/>
            <person name="Zafar N."/>
            <person name="Zhou L."/>
            <person name="Halpin R."/>
            <person name="Holley T."/>
            <person name="Khouri H.M."/>
            <person name="Feldblyum T.V."/>
            <person name="White O."/>
            <person name="Fraser C.M."/>
            <person name="Chatterjee A.K."/>
            <person name="Cartinhour S."/>
            <person name="Schneider D."/>
            <person name="Mansfield J.W."/>
            <person name="Collmer A."/>
            <person name="Buell R."/>
        </authorList>
    </citation>
    <scope>NUCLEOTIDE SEQUENCE [LARGE SCALE GENOMIC DNA]</scope>
    <source>
        <strain>1448A / Race 6</strain>
    </source>
</reference>
<comment type="function">
    <text evidence="1">The UvrABC repair system catalyzes the recognition and processing of DNA lesions. A damage recognition complex composed of 2 UvrA and 2 UvrB subunits scans DNA for abnormalities. Upon binding of the UvrA(2)B(2) complex to a putative damaged site, the DNA wraps around one UvrB monomer. DNA wrap is dependent on ATP binding by UvrB and probably causes local melting of the DNA helix, facilitating insertion of UvrB beta-hairpin between the DNA strands. Then UvrB probes one DNA strand for the presence of a lesion. If a lesion is found the UvrA subunits dissociate and the UvrB-DNA preincision complex is formed. This complex is subsequently bound by UvrC and the second UvrB is released. If no lesion is found, the DNA wraps around the other UvrB subunit that will check the other stand for damage.</text>
</comment>
<comment type="subunit">
    <text evidence="1">Forms a heterotetramer with UvrA during the search for lesions. Interacts with UvrC in an incision complex.</text>
</comment>
<comment type="subcellular location">
    <subcellularLocation>
        <location evidence="1">Cytoplasm</location>
    </subcellularLocation>
</comment>
<comment type="domain">
    <text evidence="1">The beta-hairpin motif is involved in DNA binding.</text>
</comment>
<comment type="similarity">
    <text evidence="1">Belongs to the UvrB family.</text>
</comment>
<proteinExistence type="inferred from homology"/>